<organism>
    <name type="scientific">Rhizobium leguminosarum bv. trifolii (strain WSM2304)</name>
    <dbReference type="NCBI Taxonomy" id="395492"/>
    <lineage>
        <taxon>Bacteria</taxon>
        <taxon>Pseudomonadati</taxon>
        <taxon>Pseudomonadota</taxon>
        <taxon>Alphaproteobacteria</taxon>
        <taxon>Hyphomicrobiales</taxon>
        <taxon>Rhizobiaceae</taxon>
        <taxon>Rhizobium/Agrobacterium group</taxon>
        <taxon>Rhizobium</taxon>
    </lineage>
</organism>
<accession>B5ZSI5</accession>
<evidence type="ECO:0000255" key="1">
    <source>
        <dbReference type="HAMAP-Rule" id="MF_00109"/>
    </source>
</evidence>
<reference key="1">
    <citation type="journal article" date="2010" name="Stand. Genomic Sci.">
        <title>Complete genome sequence of Rhizobium leguminosarum bv trifolii strain WSM2304, an effective microsymbiont of the South American clover Trifolium polymorphum.</title>
        <authorList>
            <person name="Reeve W."/>
            <person name="O'Hara G."/>
            <person name="Chain P."/>
            <person name="Ardley J."/>
            <person name="Brau L."/>
            <person name="Nandesena K."/>
            <person name="Tiwari R."/>
            <person name="Malfatti S."/>
            <person name="Kiss H."/>
            <person name="Lapidus A."/>
            <person name="Copeland A."/>
            <person name="Nolan M."/>
            <person name="Land M."/>
            <person name="Ivanova N."/>
            <person name="Mavromatis K."/>
            <person name="Markowitz V."/>
            <person name="Kyrpides N."/>
            <person name="Melino V."/>
            <person name="Denton M."/>
            <person name="Yates R."/>
            <person name="Howieson J."/>
        </authorList>
    </citation>
    <scope>NUCLEOTIDE SEQUENCE [LARGE SCALE GENOMIC DNA]</scope>
    <source>
        <strain>WSM2304</strain>
    </source>
</reference>
<protein>
    <recommendedName>
        <fullName evidence="1">Shikimate kinase</fullName>
        <shortName evidence="1">SK</shortName>
        <ecNumber evidence="1">2.7.1.71</ecNumber>
    </recommendedName>
</protein>
<name>AROK_RHILW</name>
<sequence length="196" mass="21712">MSEPLLTVADSLKDRARAALGSRNLILVGLMGAGKSAVGRIVASQLGIPFIDSDHEIERVSRMTIPELFAAYGEDEFRALETRVMKRLLKGGPRVVSTGGGAFINERTRRHIIKGGVSVWLKADLDVLWERVNKRDNRPLLKTENPKQTLEGLMNARYPIYAQADLTVLSRDVRKEIMADEVLKAMIEAQKESAAS</sequence>
<feature type="chain" id="PRO_1000119064" description="Shikimate kinase">
    <location>
        <begin position="1"/>
        <end position="196"/>
    </location>
</feature>
<feature type="binding site" evidence="1">
    <location>
        <begin position="32"/>
        <end position="37"/>
    </location>
    <ligand>
        <name>ATP</name>
        <dbReference type="ChEBI" id="CHEBI:30616"/>
    </ligand>
</feature>
<feature type="binding site" evidence="1">
    <location>
        <position position="36"/>
    </location>
    <ligand>
        <name>Mg(2+)</name>
        <dbReference type="ChEBI" id="CHEBI:18420"/>
    </ligand>
</feature>
<feature type="binding site" evidence="1">
    <location>
        <position position="54"/>
    </location>
    <ligand>
        <name>substrate</name>
    </ligand>
</feature>
<feature type="binding site" evidence="1">
    <location>
        <position position="78"/>
    </location>
    <ligand>
        <name>substrate</name>
    </ligand>
</feature>
<feature type="binding site" evidence="1">
    <location>
        <position position="100"/>
    </location>
    <ligand>
        <name>substrate</name>
    </ligand>
</feature>
<feature type="binding site" evidence="1">
    <location>
        <position position="138"/>
    </location>
    <ligand>
        <name>ATP</name>
        <dbReference type="ChEBI" id="CHEBI:30616"/>
    </ligand>
</feature>
<feature type="binding site" evidence="1">
    <location>
        <position position="157"/>
    </location>
    <ligand>
        <name>substrate</name>
    </ligand>
</feature>
<feature type="binding site" evidence="1">
    <location>
        <position position="174"/>
    </location>
    <ligand>
        <name>ATP</name>
        <dbReference type="ChEBI" id="CHEBI:30616"/>
    </ligand>
</feature>
<gene>
    <name evidence="1" type="primary">aroK</name>
    <name type="ordered locus">Rleg2_3596</name>
</gene>
<comment type="function">
    <text evidence="1">Catalyzes the specific phosphorylation of the 3-hydroxyl group of shikimic acid using ATP as a cosubstrate.</text>
</comment>
<comment type="catalytic activity">
    <reaction evidence="1">
        <text>shikimate + ATP = 3-phosphoshikimate + ADP + H(+)</text>
        <dbReference type="Rhea" id="RHEA:13121"/>
        <dbReference type="ChEBI" id="CHEBI:15378"/>
        <dbReference type="ChEBI" id="CHEBI:30616"/>
        <dbReference type="ChEBI" id="CHEBI:36208"/>
        <dbReference type="ChEBI" id="CHEBI:145989"/>
        <dbReference type="ChEBI" id="CHEBI:456216"/>
        <dbReference type="EC" id="2.7.1.71"/>
    </reaction>
</comment>
<comment type="cofactor">
    <cofactor evidence="1">
        <name>Mg(2+)</name>
        <dbReference type="ChEBI" id="CHEBI:18420"/>
    </cofactor>
    <text evidence="1">Binds 1 Mg(2+) ion per subunit.</text>
</comment>
<comment type="pathway">
    <text evidence="1">Metabolic intermediate biosynthesis; chorismate biosynthesis; chorismate from D-erythrose 4-phosphate and phosphoenolpyruvate: step 5/7.</text>
</comment>
<comment type="subunit">
    <text evidence="1">Monomer.</text>
</comment>
<comment type="subcellular location">
    <subcellularLocation>
        <location evidence="1">Cytoplasm</location>
    </subcellularLocation>
</comment>
<comment type="similarity">
    <text evidence="1">Belongs to the shikimate kinase family.</text>
</comment>
<keyword id="KW-0028">Amino-acid biosynthesis</keyword>
<keyword id="KW-0057">Aromatic amino acid biosynthesis</keyword>
<keyword id="KW-0067">ATP-binding</keyword>
<keyword id="KW-0963">Cytoplasm</keyword>
<keyword id="KW-0418">Kinase</keyword>
<keyword id="KW-0460">Magnesium</keyword>
<keyword id="KW-0479">Metal-binding</keyword>
<keyword id="KW-0547">Nucleotide-binding</keyword>
<keyword id="KW-1185">Reference proteome</keyword>
<keyword id="KW-0808">Transferase</keyword>
<proteinExistence type="inferred from homology"/>
<dbReference type="EC" id="2.7.1.71" evidence="1"/>
<dbReference type="EMBL" id="CP001191">
    <property type="protein sequence ID" value="ACI56863.1"/>
    <property type="molecule type" value="Genomic_DNA"/>
</dbReference>
<dbReference type="RefSeq" id="WP_012559145.1">
    <property type="nucleotide sequence ID" value="NC_011369.1"/>
</dbReference>
<dbReference type="SMR" id="B5ZSI5"/>
<dbReference type="STRING" id="395492.Rleg2_3596"/>
<dbReference type="KEGG" id="rlt:Rleg2_3596"/>
<dbReference type="eggNOG" id="COG0703">
    <property type="taxonomic scope" value="Bacteria"/>
</dbReference>
<dbReference type="HOGENOM" id="CLU_057607_2_0_5"/>
<dbReference type="UniPathway" id="UPA00053">
    <property type="reaction ID" value="UER00088"/>
</dbReference>
<dbReference type="Proteomes" id="UP000008330">
    <property type="component" value="Chromosome"/>
</dbReference>
<dbReference type="GO" id="GO:0005829">
    <property type="term" value="C:cytosol"/>
    <property type="evidence" value="ECO:0007669"/>
    <property type="project" value="TreeGrafter"/>
</dbReference>
<dbReference type="GO" id="GO:0005524">
    <property type="term" value="F:ATP binding"/>
    <property type="evidence" value="ECO:0007669"/>
    <property type="project" value="UniProtKB-UniRule"/>
</dbReference>
<dbReference type="GO" id="GO:0000287">
    <property type="term" value="F:magnesium ion binding"/>
    <property type="evidence" value="ECO:0007669"/>
    <property type="project" value="UniProtKB-UniRule"/>
</dbReference>
<dbReference type="GO" id="GO:0004765">
    <property type="term" value="F:shikimate kinase activity"/>
    <property type="evidence" value="ECO:0007669"/>
    <property type="project" value="UniProtKB-UniRule"/>
</dbReference>
<dbReference type="GO" id="GO:0008652">
    <property type="term" value="P:amino acid biosynthetic process"/>
    <property type="evidence" value="ECO:0007669"/>
    <property type="project" value="UniProtKB-KW"/>
</dbReference>
<dbReference type="GO" id="GO:0009073">
    <property type="term" value="P:aromatic amino acid family biosynthetic process"/>
    <property type="evidence" value="ECO:0007669"/>
    <property type="project" value="UniProtKB-KW"/>
</dbReference>
<dbReference type="GO" id="GO:0009423">
    <property type="term" value="P:chorismate biosynthetic process"/>
    <property type="evidence" value="ECO:0007669"/>
    <property type="project" value="UniProtKB-UniRule"/>
</dbReference>
<dbReference type="CDD" id="cd00464">
    <property type="entry name" value="SK"/>
    <property type="match status" value="1"/>
</dbReference>
<dbReference type="Gene3D" id="3.40.50.300">
    <property type="entry name" value="P-loop containing nucleotide triphosphate hydrolases"/>
    <property type="match status" value="1"/>
</dbReference>
<dbReference type="HAMAP" id="MF_00109">
    <property type="entry name" value="Shikimate_kinase"/>
    <property type="match status" value="1"/>
</dbReference>
<dbReference type="InterPro" id="IPR027417">
    <property type="entry name" value="P-loop_NTPase"/>
</dbReference>
<dbReference type="InterPro" id="IPR031322">
    <property type="entry name" value="Shikimate/glucono_kinase"/>
</dbReference>
<dbReference type="InterPro" id="IPR000623">
    <property type="entry name" value="Shikimate_kinase/TSH1"/>
</dbReference>
<dbReference type="InterPro" id="IPR023000">
    <property type="entry name" value="Shikimate_kinase_CS"/>
</dbReference>
<dbReference type="NCBIfam" id="NF010552">
    <property type="entry name" value="PRK13946.1"/>
    <property type="match status" value="1"/>
</dbReference>
<dbReference type="PANTHER" id="PTHR21087">
    <property type="entry name" value="SHIKIMATE KINASE"/>
    <property type="match status" value="1"/>
</dbReference>
<dbReference type="PANTHER" id="PTHR21087:SF16">
    <property type="entry name" value="SHIKIMATE KINASE 1, CHLOROPLASTIC"/>
    <property type="match status" value="1"/>
</dbReference>
<dbReference type="Pfam" id="PF01202">
    <property type="entry name" value="SKI"/>
    <property type="match status" value="1"/>
</dbReference>
<dbReference type="PRINTS" id="PR01100">
    <property type="entry name" value="SHIKIMTKNASE"/>
</dbReference>
<dbReference type="SUPFAM" id="SSF52540">
    <property type="entry name" value="P-loop containing nucleoside triphosphate hydrolases"/>
    <property type="match status" value="1"/>
</dbReference>
<dbReference type="PROSITE" id="PS01128">
    <property type="entry name" value="SHIKIMATE_KINASE"/>
    <property type="match status" value="1"/>
</dbReference>